<reference key="1">
    <citation type="journal article" date="2004" name="Nat. Genet.">
        <title>Evidence in the Legionella pneumophila genome for exploitation of host cell functions and high genome plasticity.</title>
        <authorList>
            <person name="Cazalet C."/>
            <person name="Rusniok C."/>
            <person name="Brueggemann H."/>
            <person name="Zidane N."/>
            <person name="Magnier A."/>
            <person name="Ma L."/>
            <person name="Tichit M."/>
            <person name="Jarraud S."/>
            <person name="Bouchier C."/>
            <person name="Vandenesch F."/>
            <person name="Kunst F."/>
            <person name="Etienne J."/>
            <person name="Glaser P."/>
            <person name="Buchrieser C."/>
        </authorList>
    </citation>
    <scope>NUCLEOTIDE SEQUENCE [LARGE SCALE GENOMIC DNA]</scope>
    <source>
        <strain>Paris</strain>
    </source>
</reference>
<accession>Q5X5Q1</accession>
<feature type="chain" id="PRO_0000098796" description="Tryptophan synthase alpha chain">
    <location>
        <begin position="1"/>
        <end position="272"/>
    </location>
</feature>
<feature type="active site" description="Proton acceptor" evidence="1">
    <location>
        <position position="49"/>
    </location>
</feature>
<feature type="active site" description="Proton acceptor" evidence="1">
    <location>
        <position position="60"/>
    </location>
</feature>
<feature type="helix" evidence="2">
    <location>
        <begin position="3"/>
        <end position="13"/>
    </location>
</feature>
<feature type="strand" evidence="2">
    <location>
        <begin position="18"/>
        <end position="24"/>
    </location>
</feature>
<feature type="helix" evidence="2">
    <location>
        <begin position="30"/>
        <end position="32"/>
    </location>
</feature>
<feature type="helix" evidence="2">
    <location>
        <begin position="33"/>
        <end position="42"/>
    </location>
</feature>
<feature type="strand" evidence="2">
    <location>
        <begin position="46"/>
        <end position="51"/>
    </location>
</feature>
<feature type="helix" evidence="2">
    <location>
        <begin position="62"/>
        <end position="73"/>
    </location>
</feature>
<feature type="helix" evidence="2">
    <location>
        <begin position="78"/>
        <end position="89"/>
    </location>
</feature>
<feature type="strand" evidence="2">
    <location>
        <begin position="93"/>
        <end position="95"/>
    </location>
</feature>
<feature type="strand" evidence="2">
    <location>
        <begin position="97"/>
        <end position="101"/>
    </location>
</feature>
<feature type="helix" evidence="2">
    <location>
        <begin position="103"/>
        <end position="109"/>
    </location>
</feature>
<feature type="helix" evidence="2">
    <location>
        <begin position="111"/>
        <end position="121"/>
    </location>
</feature>
<feature type="strand" evidence="2">
    <location>
        <begin position="125"/>
        <end position="128"/>
    </location>
</feature>
<feature type="helix" evidence="2">
    <location>
        <begin position="133"/>
        <end position="135"/>
    </location>
</feature>
<feature type="helix" evidence="2">
    <location>
        <begin position="137"/>
        <end position="146"/>
    </location>
</feature>
<feature type="helix" evidence="2">
    <location>
        <begin position="160"/>
        <end position="167"/>
    </location>
</feature>
<feature type="strand" evidence="2">
    <location>
        <begin position="174"/>
        <end position="176"/>
    </location>
</feature>
<feature type="helix" evidence="2">
    <location>
        <begin position="190"/>
        <end position="201"/>
    </location>
</feature>
<feature type="strand" evidence="2">
    <location>
        <begin position="208"/>
        <end position="210"/>
    </location>
</feature>
<feature type="helix" evidence="2">
    <location>
        <begin position="217"/>
        <end position="224"/>
    </location>
</feature>
<feature type="strand" evidence="2">
    <location>
        <begin position="227"/>
        <end position="232"/>
    </location>
</feature>
<feature type="helix" evidence="2">
    <location>
        <begin position="234"/>
        <end position="245"/>
    </location>
</feature>
<feature type="helix" evidence="2">
    <location>
        <begin position="250"/>
        <end position="266"/>
    </location>
</feature>
<proteinExistence type="evidence at protein level"/>
<sequence length="272" mass="29892">MNRIDKTLEKLKANRKKMLSPYITAGDPYPELTVSLMHQLVKSGADVLELGIPFSDPMAEGPVIQRAMERALAHSIHCDDVLNMVRQFRKTDTETPVILMGYLNPIEQYGYDLFAQQAVEAGADGTILVDLPPEEADGVSRVWQKHGLYSIYLCSPTTSAERMNFINQHANGYLYYVSLKGVTGSDALKLPELKAQYLQRKAQSKLPLMVGFGIKTPEMAAQVAEFADGVIVGAALINEIIEAYEAKKDPLQASGALLSSMRQAIDNIGSMV</sequence>
<keyword id="KW-0002">3D-structure</keyword>
<keyword id="KW-0028">Amino-acid biosynthesis</keyword>
<keyword id="KW-0057">Aromatic amino acid biosynthesis</keyword>
<keyword id="KW-0456">Lyase</keyword>
<keyword id="KW-0822">Tryptophan biosynthesis</keyword>
<dbReference type="EC" id="4.2.1.20" evidence="1"/>
<dbReference type="EMBL" id="CR628336">
    <property type="protein sequence ID" value="CAH12420.1"/>
    <property type="molecule type" value="Genomic_DNA"/>
</dbReference>
<dbReference type="RefSeq" id="WP_011213616.1">
    <property type="nucleotide sequence ID" value="NC_006368.1"/>
</dbReference>
<dbReference type="PDB" id="5KMY">
    <property type="method" value="X-ray"/>
    <property type="resolution" value="1.91 A"/>
    <property type="chains" value="A=1-272"/>
</dbReference>
<dbReference type="PDBsum" id="5KMY"/>
<dbReference type="SMR" id="Q5X5Q1"/>
<dbReference type="KEGG" id="lpp:lpp1269"/>
<dbReference type="LegioList" id="lpp1269"/>
<dbReference type="HOGENOM" id="CLU_016734_0_0_6"/>
<dbReference type="UniPathway" id="UPA00035">
    <property type="reaction ID" value="UER00044"/>
</dbReference>
<dbReference type="GO" id="GO:0005829">
    <property type="term" value="C:cytosol"/>
    <property type="evidence" value="ECO:0007669"/>
    <property type="project" value="TreeGrafter"/>
</dbReference>
<dbReference type="GO" id="GO:0004834">
    <property type="term" value="F:tryptophan synthase activity"/>
    <property type="evidence" value="ECO:0007669"/>
    <property type="project" value="UniProtKB-UniRule"/>
</dbReference>
<dbReference type="CDD" id="cd04724">
    <property type="entry name" value="Tryptophan_synthase_alpha"/>
    <property type="match status" value="1"/>
</dbReference>
<dbReference type="FunFam" id="3.20.20.70:FF:000037">
    <property type="entry name" value="Tryptophan synthase alpha chain"/>
    <property type="match status" value="1"/>
</dbReference>
<dbReference type="Gene3D" id="3.20.20.70">
    <property type="entry name" value="Aldolase class I"/>
    <property type="match status" value="1"/>
</dbReference>
<dbReference type="HAMAP" id="MF_00131">
    <property type="entry name" value="Trp_synth_alpha"/>
    <property type="match status" value="1"/>
</dbReference>
<dbReference type="InterPro" id="IPR013785">
    <property type="entry name" value="Aldolase_TIM"/>
</dbReference>
<dbReference type="InterPro" id="IPR011060">
    <property type="entry name" value="RibuloseP-bd_barrel"/>
</dbReference>
<dbReference type="InterPro" id="IPR018204">
    <property type="entry name" value="Trp_synthase_alpha_AS"/>
</dbReference>
<dbReference type="InterPro" id="IPR002028">
    <property type="entry name" value="Trp_synthase_suA"/>
</dbReference>
<dbReference type="NCBIfam" id="TIGR00262">
    <property type="entry name" value="trpA"/>
    <property type="match status" value="1"/>
</dbReference>
<dbReference type="PANTHER" id="PTHR43406:SF1">
    <property type="entry name" value="TRYPTOPHAN SYNTHASE ALPHA CHAIN, CHLOROPLASTIC"/>
    <property type="match status" value="1"/>
</dbReference>
<dbReference type="PANTHER" id="PTHR43406">
    <property type="entry name" value="TRYPTOPHAN SYNTHASE, ALPHA CHAIN"/>
    <property type="match status" value="1"/>
</dbReference>
<dbReference type="Pfam" id="PF00290">
    <property type="entry name" value="Trp_syntA"/>
    <property type="match status" value="1"/>
</dbReference>
<dbReference type="SUPFAM" id="SSF51366">
    <property type="entry name" value="Ribulose-phoshate binding barrel"/>
    <property type="match status" value="1"/>
</dbReference>
<dbReference type="PROSITE" id="PS00167">
    <property type="entry name" value="TRP_SYNTHASE_ALPHA"/>
    <property type="match status" value="1"/>
</dbReference>
<name>TRPA_LEGPA</name>
<protein>
    <recommendedName>
        <fullName evidence="1">Tryptophan synthase alpha chain</fullName>
        <ecNumber evidence="1">4.2.1.20</ecNumber>
    </recommendedName>
</protein>
<gene>
    <name evidence="1" type="primary">trpA</name>
    <name type="ordered locus">lpp1269</name>
</gene>
<organism>
    <name type="scientific">Legionella pneumophila (strain Paris)</name>
    <dbReference type="NCBI Taxonomy" id="297246"/>
    <lineage>
        <taxon>Bacteria</taxon>
        <taxon>Pseudomonadati</taxon>
        <taxon>Pseudomonadota</taxon>
        <taxon>Gammaproteobacteria</taxon>
        <taxon>Legionellales</taxon>
        <taxon>Legionellaceae</taxon>
        <taxon>Legionella</taxon>
    </lineage>
</organism>
<comment type="function">
    <text evidence="1">The alpha subunit is responsible for the aldol cleavage of indoleglycerol phosphate to indole and glyceraldehyde 3-phosphate.</text>
</comment>
<comment type="catalytic activity">
    <reaction evidence="1">
        <text>(1S,2R)-1-C-(indol-3-yl)glycerol 3-phosphate + L-serine = D-glyceraldehyde 3-phosphate + L-tryptophan + H2O</text>
        <dbReference type="Rhea" id="RHEA:10532"/>
        <dbReference type="ChEBI" id="CHEBI:15377"/>
        <dbReference type="ChEBI" id="CHEBI:33384"/>
        <dbReference type="ChEBI" id="CHEBI:57912"/>
        <dbReference type="ChEBI" id="CHEBI:58866"/>
        <dbReference type="ChEBI" id="CHEBI:59776"/>
        <dbReference type="EC" id="4.2.1.20"/>
    </reaction>
</comment>
<comment type="pathway">
    <text evidence="1">Amino-acid biosynthesis; L-tryptophan biosynthesis; L-tryptophan from chorismate: step 5/5.</text>
</comment>
<comment type="subunit">
    <text evidence="1">Tetramer of two alpha and two beta chains.</text>
</comment>
<comment type="similarity">
    <text evidence="1">Belongs to the TrpA family.</text>
</comment>
<evidence type="ECO:0000255" key="1">
    <source>
        <dbReference type="HAMAP-Rule" id="MF_00131"/>
    </source>
</evidence>
<evidence type="ECO:0007829" key="2">
    <source>
        <dbReference type="PDB" id="5KMY"/>
    </source>
</evidence>